<protein>
    <recommendedName>
        <fullName evidence="1">Large ribosomal subunit protein bL17</fullName>
    </recommendedName>
    <alternativeName>
        <fullName evidence="3">50S ribosomal protein L17</fullName>
    </alternativeName>
</protein>
<organism>
    <name type="scientific">Flavobacterium psychrophilum (strain ATCC 49511 / DSM 21280 / CIP 103535 / JIP02/86)</name>
    <dbReference type="NCBI Taxonomy" id="402612"/>
    <lineage>
        <taxon>Bacteria</taxon>
        <taxon>Pseudomonadati</taxon>
        <taxon>Bacteroidota</taxon>
        <taxon>Flavobacteriia</taxon>
        <taxon>Flavobacteriales</taxon>
        <taxon>Flavobacteriaceae</taxon>
        <taxon>Flavobacterium</taxon>
    </lineage>
</organism>
<proteinExistence type="inferred from homology"/>
<reference key="1">
    <citation type="journal article" date="2007" name="Nat. Biotechnol.">
        <title>Complete genome sequence of the fish pathogen Flavobacterium psychrophilum.</title>
        <authorList>
            <person name="Duchaud E."/>
            <person name="Boussaha M."/>
            <person name="Loux V."/>
            <person name="Bernardet J.-F."/>
            <person name="Michel C."/>
            <person name="Kerouault B."/>
            <person name="Mondot S."/>
            <person name="Nicolas P."/>
            <person name="Bossy R."/>
            <person name="Caron C."/>
            <person name="Bessieres P."/>
            <person name="Gibrat J.-F."/>
            <person name="Claverol S."/>
            <person name="Dumetz F."/>
            <person name="Le Henaff M."/>
            <person name="Benmansour A."/>
        </authorList>
    </citation>
    <scope>NUCLEOTIDE SEQUENCE [LARGE SCALE GENOMIC DNA]</scope>
    <source>
        <strain>ATCC 49511 / DSM 21280 / CIP 103535 / JIP02/86</strain>
    </source>
</reference>
<comment type="subunit">
    <text evidence="1">Part of the 50S ribosomal subunit. Contacts protein L32.</text>
</comment>
<comment type="similarity">
    <text evidence="1">Belongs to the bacterial ribosomal protein bL17 family.</text>
</comment>
<evidence type="ECO:0000255" key="1">
    <source>
        <dbReference type="HAMAP-Rule" id="MF_01368"/>
    </source>
</evidence>
<evidence type="ECO:0000256" key="2">
    <source>
        <dbReference type="SAM" id="MobiDB-lite"/>
    </source>
</evidence>
<evidence type="ECO:0000305" key="3"/>
<name>RL17_FLAPJ</name>
<gene>
    <name evidence="1" type="primary">rplQ</name>
    <name type="ordered locus">FP1312</name>
</gene>
<feature type="chain" id="PRO_1000055824" description="Large ribosomal subunit protein bL17">
    <location>
        <begin position="1"/>
        <end position="162"/>
    </location>
</feature>
<feature type="region of interest" description="Disordered" evidence="2">
    <location>
        <begin position="126"/>
        <end position="162"/>
    </location>
</feature>
<feature type="compositionally biased region" description="Low complexity" evidence="2">
    <location>
        <begin position="146"/>
        <end position="155"/>
    </location>
</feature>
<accession>A6GZ72</accession>
<sequence>MRHGKKFNHLSRQKGHRAAMLANMACSLIEHKRINTTVAKAKALKQFVEPLITKSKDDTTHNRRICFAYLRSKYAVTDLFRDVAAKVGDRPGGYTRIIKLGNRLGDNADMAMIELVDFNELYNGGKKEEVKTKSRRGGKAKKAEPTTEAPANTTEETTDSAE</sequence>
<dbReference type="EMBL" id="AM398681">
    <property type="protein sequence ID" value="CAL43395.1"/>
    <property type="molecule type" value="Genomic_DNA"/>
</dbReference>
<dbReference type="RefSeq" id="WP_011963444.1">
    <property type="nucleotide sequence ID" value="NC_009613.3"/>
</dbReference>
<dbReference type="RefSeq" id="YP_001296206.1">
    <property type="nucleotide sequence ID" value="NC_009613.3"/>
</dbReference>
<dbReference type="SMR" id="A6GZ72"/>
<dbReference type="STRING" id="402612.FP1312"/>
<dbReference type="EnsemblBacteria" id="CAL43395">
    <property type="protein sequence ID" value="CAL43395"/>
    <property type="gene ID" value="FP1312"/>
</dbReference>
<dbReference type="GeneID" id="66553215"/>
<dbReference type="KEGG" id="fps:FP1312"/>
<dbReference type="PATRIC" id="fig|402612.5.peg.1329"/>
<dbReference type="eggNOG" id="COG0203">
    <property type="taxonomic scope" value="Bacteria"/>
</dbReference>
<dbReference type="HOGENOM" id="CLU_074407_0_1_10"/>
<dbReference type="OrthoDB" id="9809073at2"/>
<dbReference type="Proteomes" id="UP000006394">
    <property type="component" value="Chromosome"/>
</dbReference>
<dbReference type="GO" id="GO:0022625">
    <property type="term" value="C:cytosolic large ribosomal subunit"/>
    <property type="evidence" value="ECO:0007669"/>
    <property type="project" value="TreeGrafter"/>
</dbReference>
<dbReference type="GO" id="GO:0003735">
    <property type="term" value="F:structural constituent of ribosome"/>
    <property type="evidence" value="ECO:0007669"/>
    <property type="project" value="InterPro"/>
</dbReference>
<dbReference type="GO" id="GO:0006412">
    <property type="term" value="P:translation"/>
    <property type="evidence" value="ECO:0007669"/>
    <property type="project" value="UniProtKB-UniRule"/>
</dbReference>
<dbReference type="FunFam" id="3.90.1030.10:FF:000006">
    <property type="entry name" value="50S ribosomal protein L17"/>
    <property type="match status" value="1"/>
</dbReference>
<dbReference type="Gene3D" id="3.90.1030.10">
    <property type="entry name" value="Ribosomal protein L17"/>
    <property type="match status" value="1"/>
</dbReference>
<dbReference type="HAMAP" id="MF_01368">
    <property type="entry name" value="Ribosomal_bL17"/>
    <property type="match status" value="1"/>
</dbReference>
<dbReference type="InterPro" id="IPR000456">
    <property type="entry name" value="Ribosomal_bL17"/>
</dbReference>
<dbReference type="InterPro" id="IPR047859">
    <property type="entry name" value="Ribosomal_bL17_CS"/>
</dbReference>
<dbReference type="InterPro" id="IPR036373">
    <property type="entry name" value="Ribosomal_bL17_sf"/>
</dbReference>
<dbReference type="NCBIfam" id="TIGR00059">
    <property type="entry name" value="L17"/>
    <property type="match status" value="1"/>
</dbReference>
<dbReference type="PANTHER" id="PTHR14413:SF16">
    <property type="entry name" value="LARGE RIBOSOMAL SUBUNIT PROTEIN BL17M"/>
    <property type="match status" value="1"/>
</dbReference>
<dbReference type="PANTHER" id="PTHR14413">
    <property type="entry name" value="RIBOSOMAL PROTEIN L17"/>
    <property type="match status" value="1"/>
</dbReference>
<dbReference type="Pfam" id="PF01196">
    <property type="entry name" value="Ribosomal_L17"/>
    <property type="match status" value="1"/>
</dbReference>
<dbReference type="SUPFAM" id="SSF64263">
    <property type="entry name" value="Prokaryotic ribosomal protein L17"/>
    <property type="match status" value="1"/>
</dbReference>
<dbReference type="PROSITE" id="PS01167">
    <property type="entry name" value="RIBOSOMAL_L17"/>
    <property type="match status" value="1"/>
</dbReference>
<keyword id="KW-1185">Reference proteome</keyword>
<keyword id="KW-0687">Ribonucleoprotein</keyword>
<keyword id="KW-0689">Ribosomal protein</keyword>